<dbReference type="EC" id="4.1.1.18"/>
<dbReference type="EMBL" id="AE005174">
    <property type="protein sequence ID" value="AAG59331.1"/>
    <property type="molecule type" value="Genomic_DNA"/>
</dbReference>
<dbReference type="EMBL" id="BA000007">
    <property type="protein sequence ID" value="BAB38536.1"/>
    <property type="molecule type" value="Genomic_DNA"/>
</dbReference>
<dbReference type="PIR" id="A98268">
    <property type="entry name" value="A98268"/>
</dbReference>
<dbReference type="PIR" id="G86108">
    <property type="entry name" value="G86108"/>
</dbReference>
<dbReference type="RefSeq" id="NP_313140.1">
    <property type="nucleotide sequence ID" value="NC_002695.1"/>
</dbReference>
<dbReference type="RefSeq" id="WP_001295383.1">
    <property type="nucleotide sequence ID" value="NZ_VOAI01000008.1"/>
</dbReference>
<dbReference type="SMR" id="P0A9H4"/>
<dbReference type="STRING" id="155864.Z5734"/>
<dbReference type="GeneID" id="75203986"/>
<dbReference type="GeneID" id="914175"/>
<dbReference type="KEGG" id="ece:Z5734"/>
<dbReference type="KEGG" id="ecs:ECs_5113"/>
<dbReference type="PATRIC" id="fig|386585.9.peg.5344"/>
<dbReference type="eggNOG" id="COG1982">
    <property type="taxonomic scope" value="Bacteria"/>
</dbReference>
<dbReference type="HOGENOM" id="CLU_014292_3_0_6"/>
<dbReference type="OMA" id="HKSVFHA"/>
<dbReference type="Proteomes" id="UP000000558">
    <property type="component" value="Chromosome"/>
</dbReference>
<dbReference type="Proteomes" id="UP000002519">
    <property type="component" value="Chromosome"/>
</dbReference>
<dbReference type="GO" id="GO:0005829">
    <property type="term" value="C:cytosol"/>
    <property type="evidence" value="ECO:0007669"/>
    <property type="project" value="TreeGrafter"/>
</dbReference>
<dbReference type="GO" id="GO:0008792">
    <property type="term" value="F:arginine decarboxylase activity"/>
    <property type="evidence" value="ECO:0007669"/>
    <property type="project" value="TreeGrafter"/>
</dbReference>
<dbReference type="GO" id="GO:0008923">
    <property type="term" value="F:lysine decarboxylase activity"/>
    <property type="evidence" value="ECO:0007669"/>
    <property type="project" value="UniProtKB-EC"/>
</dbReference>
<dbReference type="GO" id="GO:0030170">
    <property type="term" value="F:pyridoxal phosphate binding"/>
    <property type="evidence" value="ECO:0007669"/>
    <property type="project" value="TreeGrafter"/>
</dbReference>
<dbReference type="GO" id="GO:0006527">
    <property type="term" value="P:arginine catabolic process"/>
    <property type="evidence" value="ECO:0007669"/>
    <property type="project" value="TreeGrafter"/>
</dbReference>
<dbReference type="CDD" id="cd00615">
    <property type="entry name" value="Orn_deC_like"/>
    <property type="match status" value="1"/>
</dbReference>
<dbReference type="FunFam" id="3.40.50.2300:FF:000084">
    <property type="entry name" value="Lysine decarboxylase, inducible"/>
    <property type="match status" value="1"/>
</dbReference>
<dbReference type="FunFam" id="3.40.640.10:FF:000008">
    <property type="entry name" value="Lysine decarboxylase, inducible"/>
    <property type="match status" value="1"/>
</dbReference>
<dbReference type="FunFam" id="3.90.100.10:FF:000001">
    <property type="entry name" value="Lysine decarboxylase, inducible"/>
    <property type="match status" value="1"/>
</dbReference>
<dbReference type="FunFam" id="3.90.1150.10:FF:000016">
    <property type="entry name" value="Lysine decarboxylase, inducible"/>
    <property type="match status" value="1"/>
</dbReference>
<dbReference type="Gene3D" id="3.40.50.2300">
    <property type="match status" value="1"/>
</dbReference>
<dbReference type="Gene3D" id="3.90.1150.10">
    <property type="entry name" value="Aspartate Aminotransferase, domain 1"/>
    <property type="match status" value="1"/>
</dbReference>
<dbReference type="Gene3D" id="3.90.100.10">
    <property type="entry name" value="Orn/Lys/Arg decarboxylase, C-terminal domain"/>
    <property type="match status" value="1"/>
</dbReference>
<dbReference type="Gene3D" id="3.40.640.10">
    <property type="entry name" value="Type I PLP-dependent aspartate aminotransferase-like (Major domain)"/>
    <property type="match status" value="1"/>
</dbReference>
<dbReference type="InterPro" id="IPR005308">
    <property type="entry name" value="OKR_de-COase_N"/>
</dbReference>
<dbReference type="InterPro" id="IPR011193">
    <property type="entry name" value="Orn/lys/arg_de-COase"/>
</dbReference>
<dbReference type="InterPro" id="IPR000310">
    <property type="entry name" value="Orn/Lys/Arg_deCO2ase_major_dom"/>
</dbReference>
<dbReference type="InterPro" id="IPR008286">
    <property type="entry name" value="Prn/Lys/Arg_de-COase_C"/>
</dbReference>
<dbReference type="InterPro" id="IPR036633">
    <property type="entry name" value="Prn/Lys/Arg_de-COase_C_sf"/>
</dbReference>
<dbReference type="InterPro" id="IPR015424">
    <property type="entry name" value="PyrdxlP-dep_Trfase"/>
</dbReference>
<dbReference type="InterPro" id="IPR015421">
    <property type="entry name" value="PyrdxlP-dep_Trfase_major"/>
</dbReference>
<dbReference type="InterPro" id="IPR015422">
    <property type="entry name" value="PyrdxlP-dep_Trfase_small"/>
</dbReference>
<dbReference type="NCBIfam" id="NF011928">
    <property type="entry name" value="PRK15399.1"/>
    <property type="match status" value="1"/>
</dbReference>
<dbReference type="NCBIfam" id="NF011929">
    <property type="entry name" value="PRK15400.1"/>
    <property type="match status" value="1"/>
</dbReference>
<dbReference type="PANTHER" id="PTHR45229:SF3">
    <property type="entry name" value="BIODEGRADATIVE ARGININE DECARBOXYLASE"/>
    <property type="match status" value="1"/>
</dbReference>
<dbReference type="PANTHER" id="PTHR45229">
    <property type="entry name" value="CONSTITUTIVE ORNITHINE DECARBOXYLASE"/>
    <property type="match status" value="1"/>
</dbReference>
<dbReference type="Pfam" id="PF01276">
    <property type="entry name" value="OKR_DC_1"/>
    <property type="match status" value="1"/>
</dbReference>
<dbReference type="Pfam" id="PF03711">
    <property type="entry name" value="OKR_DC_1_C"/>
    <property type="match status" value="1"/>
</dbReference>
<dbReference type="Pfam" id="PF03709">
    <property type="entry name" value="OKR_DC_1_N"/>
    <property type="match status" value="1"/>
</dbReference>
<dbReference type="PIRSF" id="PIRSF009393">
    <property type="entry name" value="Orn_decarb"/>
    <property type="match status" value="1"/>
</dbReference>
<dbReference type="SUPFAM" id="SSF55904">
    <property type="entry name" value="Ornithine decarboxylase C-terminal domain"/>
    <property type="match status" value="1"/>
</dbReference>
<dbReference type="SUPFAM" id="SSF53383">
    <property type="entry name" value="PLP-dependent transferases"/>
    <property type="match status" value="1"/>
</dbReference>
<dbReference type="PROSITE" id="PS00703">
    <property type="entry name" value="OKR_DC_1"/>
    <property type="match status" value="1"/>
</dbReference>
<gene>
    <name type="primary">cadA</name>
    <name type="synonym">ldcI</name>
    <name type="ordered locus">Z5734</name>
    <name type="ordered locus">ECs5113</name>
</gene>
<organism>
    <name type="scientific">Escherichia coli O157:H7</name>
    <dbReference type="NCBI Taxonomy" id="83334"/>
    <lineage>
        <taxon>Bacteria</taxon>
        <taxon>Pseudomonadati</taxon>
        <taxon>Pseudomonadota</taxon>
        <taxon>Gammaproteobacteria</taxon>
        <taxon>Enterobacterales</taxon>
        <taxon>Enterobacteriaceae</taxon>
        <taxon>Escherichia</taxon>
    </lineage>
</organism>
<comment type="catalytic activity">
    <reaction>
        <text>L-lysine + H(+) = cadaverine + CO2</text>
        <dbReference type="Rhea" id="RHEA:22352"/>
        <dbReference type="ChEBI" id="CHEBI:15378"/>
        <dbReference type="ChEBI" id="CHEBI:16526"/>
        <dbReference type="ChEBI" id="CHEBI:32551"/>
        <dbReference type="ChEBI" id="CHEBI:58384"/>
        <dbReference type="EC" id="4.1.1.18"/>
    </reaction>
</comment>
<comment type="cofactor">
    <cofactor evidence="1">
        <name>pyridoxal 5'-phosphate</name>
        <dbReference type="ChEBI" id="CHEBI:597326"/>
    </cofactor>
</comment>
<comment type="subunit">
    <text evidence="1">Homodecamer. Interacts with RavA.</text>
</comment>
<comment type="subcellular location">
    <subcellularLocation>
        <location evidence="2">Cytoplasm</location>
    </subcellularLocation>
</comment>
<comment type="similarity">
    <text evidence="2">Belongs to the Orn/Lys/Arg decarboxylase class-I family.</text>
</comment>
<sequence>MNVIAILNHMGVYFKEEPIRELHRALERLNFQIVYPNDRDDLLKLIENNARLCGVIFDWDKYNLELCEEISKMNENLPLYAFANTYSTLDVSLNDLRLQISFFEYALGAAEDIANKIKQTTDEYINTILPPLTKALFKYVREGKYTFCTPGHMGGTAFQKSPVGSLFYDFFGPNTMKSDISISVSELGSLLDHSGPHKEAEQYIARVFNADRSYMVTNGTSTANKIVGMYSAPAGSTILIDRNCHKSLTHLMMMSDVTPIYFRPTRNAYGILGGIPQSEFQHATIAKRVKETPNATWPVHAVITNSTYDGLLYNTDFIKKTLDVKSIHFDSAWVPYTNFSPIYEGKCGMSGGRVEGKVIYETQSTHKLLAAFSQASMIHVKGDVNEETFNEAYMMHTTTSPHYGIVASTETAAAMMKGNAGKRLINGSIERAIKFRKEIKRLRTESDGWFFDVWQPDHIDTTECWPLRSDSTWHGFKNIDNEHMYLDPIKVTLLTPGMEKDGTMSDFGIPASIVAKYLDEHGIVVEKTGPYNLLFLFSIGIDKTKALSLLRALTDFKRAFDLNLRVKNMLPSLYREDPEFYENMRIQELAQNIHKLIVHHNLPDLMYRAFEVLPTMVMTPYAAFQKELHGMTEEVYLDEMVGRINANMILPYPPGVPLVMPGEMITEESRPVLEFLQMLCEIGAHYPGFETDIHGAYRQADGRYTVKVLKEESKK</sequence>
<proteinExistence type="inferred from homology"/>
<protein>
    <recommendedName>
        <fullName>Inducible lysine decarboxylase</fullName>
        <shortName>LDC</shortName>
        <ecNumber>4.1.1.18</ecNumber>
    </recommendedName>
</protein>
<feature type="chain" id="PRO_0000201139" description="Inducible lysine decarboxylase">
    <location>
        <begin position="1"/>
        <end position="715"/>
    </location>
</feature>
<feature type="modified residue" description="N6-(pyridoxal phosphate)lysine" evidence="1">
    <location>
        <position position="367"/>
    </location>
</feature>
<name>LDCI_ECO57</name>
<reference key="1">
    <citation type="journal article" date="2001" name="Nature">
        <title>Genome sequence of enterohaemorrhagic Escherichia coli O157:H7.</title>
        <authorList>
            <person name="Perna N.T."/>
            <person name="Plunkett G. III"/>
            <person name="Burland V."/>
            <person name="Mau B."/>
            <person name="Glasner J.D."/>
            <person name="Rose D.J."/>
            <person name="Mayhew G.F."/>
            <person name="Evans P.S."/>
            <person name="Gregor J."/>
            <person name="Kirkpatrick H.A."/>
            <person name="Posfai G."/>
            <person name="Hackett J."/>
            <person name="Klink S."/>
            <person name="Boutin A."/>
            <person name="Shao Y."/>
            <person name="Miller L."/>
            <person name="Grotbeck E.J."/>
            <person name="Davis N.W."/>
            <person name="Lim A."/>
            <person name="Dimalanta E.T."/>
            <person name="Potamousis K."/>
            <person name="Apodaca J."/>
            <person name="Anantharaman T.S."/>
            <person name="Lin J."/>
            <person name="Yen G."/>
            <person name="Schwartz D.C."/>
            <person name="Welch R.A."/>
            <person name="Blattner F.R."/>
        </authorList>
    </citation>
    <scope>NUCLEOTIDE SEQUENCE [LARGE SCALE GENOMIC DNA]</scope>
    <source>
        <strain>O157:H7 / EDL933 / ATCC 700927 / EHEC</strain>
    </source>
</reference>
<reference key="2">
    <citation type="journal article" date="2001" name="DNA Res.">
        <title>Complete genome sequence of enterohemorrhagic Escherichia coli O157:H7 and genomic comparison with a laboratory strain K-12.</title>
        <authorList>
            <person name="Hayashi T."/>
            <person name="Makino K."/>
            <person name="Ohnishi M."/>
            <person name="Kurokawa K."/>
            <person name="Ishii K."/>
            <person name="Yokoyama K."/>
            <person name="Han C.-G."/>
            <person name="Ohtsubo E."/>
            <person name="Nakayama K."/>
            <person name="Murata T."/>
            <person name="Tanaka M."/>
            <person name="Tobe T."/>
            <person name="Iida T."/>
            <person name="Takami H."/>
            <person name="Honda T."/>
            <person name="Sasakawa C."/>
            <person name="Ogasawara N."/>
            <person name="Yasunaga T."/>
            <person name="Kuhara S."/>
            <person name="Shiba T."/>
            <person name="Hattori M."/>
            <person name="Shinagawa H."/>
        </authorList>
    </citation>
    <scope>NUCLEOTIDE SEQUENCE [LARGE SCALE GENOMIC DNA]</scope>
    <source>
        <strain>O157:H7 / Sakai / RIMD 0509952 / EHEC</strain>
    </source>
</reference>
<keyword id="KW-0963">Cytoplasm</keyword>
<keyword id="KW-0210">Decarboxylase</keyword>
<keyword id="KW-0456">Lyase</keyword>
<keyword id="KW-0663">Pyridoxal phosphate</keyword>
<keyword id="KW-1185">Reference proteome</keyword>
<evidence type="ECO:0000250" key="1"/>
<evidence type="ECO:0000305" key="2"/>
<accession>P0A9H4</accession>
<accession>P23892</accession>